<dbReference type="EC" id="4.2.1.9" evidence="1"/>
<dbReference type="EMBL" id="CP000672">
    <property type="protein sequence ID" value="ABR00298.1"/>
    <property type="molecule type" value="Genomic_DNA"/>
</dbReference>
<dbReference type="SMR" id="A5UHP2"/>
<dbReference type="KEGG" id="hiq:CGSHiGG_07165"/>
<dbReference type="HOGENOM" id="CLU_014271_4_2_6"/>
<dbReference type="UniPathway" id="UPA00047">
    <property type="reaction ID" value="UER00057"/>
</dbReference>
<dbReference type="UniPathway" id="UPA00049">
    <property type="reaction ID" value="UER00061"/>
</dbReference>
<dbReference type="Proteomes" id="UP000001990">
    <property type="component" value="Chromosome"/>
</dbReference>
<dbReference type="GO" id="GO:0005829">
    <property type="term" value="C:cytosol"/>
    <property type="evidence" value="ECO:0007669"/>
    <property type="project" value="TreeGrafter"/>
</dbReference>
<dbReference type="GO" id="GO:0051537">
    <property type="term" value="F:2 iron, 2 sulfur cluster binding"/>
    <property type="evidence" value="ECO:0007669"/>
    <property type="project" value="UniProtKB-UniRule"/>
</dbReference>
<dbReference type="GO" id="GO:0004160">
    <property type="term" value="F:dihydroxy-acid dehydratase activity"/>
    <property type="evidence" value="ECO:0007669"/>
    <property type="project" value="UniProtKB-UniRule"/>
</dbReference>
<dbReference type="GO" id="GO:0000287">
    <property type="term" value="F:magnesium ion binding"/>
    <property type="evidence" value="ECO:0007669"/>
    <property type="project" value="UniProtKB-UniRule"/>
</dbReference>
<dbReference type="GO" id="GO:0009097">
    <property type="term" value="P:isoleucine biosynthetic process"/>
    <property type="evidence" value="ECO:0007669"/>
    <property type="project" value="UniProtKB-UniRule"/>
</dbReference>
<dbReference type="GO" id="GO:0009099">
    <property type="term" value="P:L-valine biosynthetic process"/>
    <property type="evidence" value="ECO:0007669"/>
    <property type="project" value="UniProtKB-UniRule"/>
</dbReference>
<dbReference type="FunFam" id="3.50.30.80:FF:000001">
    <property type="entry name" value="Dihydroxy-acid dehydratase"/>
    <property type="match status" value="1"/>
</dbReference>
<dbReference type="Gene3D" id="3.50.30.80">
    <property type="entry name" value="IlvD/EDD C-terminal domain-like"/>
    <property type="match status" value="1"/>
</dbReference>
<dbReference type="HAMAP" id="MF_00012">
    <property type="entry name" value="IlvD"/>
    <property type="match status" value="1"/>
</dbReference>
<dbReference type="InterPro" id="IPR042096">
    <property type="entry name" value="Dihydro-acid_dehy_C"/>
</dbReference>
<dbReference type="InterPro" id="IPR004404">
    <property type="entry name" value="DihydroxyA_deHydtase"/>
</dbReference>
<dbReference type="InterPro" id="IPR020558">
    <property type="entry name" value="DiOHA_6PGluconate_deHydtase_CS"/>
</dbReference>
<dbReference type="InterPro" id="IPR056740">
    <property type="entry name" value="ILV_EDD_C"/>
</dbReference>
<dbReference type="InterPro" id="IPR000581">
    <property type="entry name" value="ILV_EDD_N"/>
</dbReference>
<dbReference type="InterPro" id="IPR037237">
    <property type="entry name" value="IlvD/EDD_N"/>
</dbReference>
<dbReference type="NCBIfam" id="TIGR00110">
    <property type="entry name" value="ilvD"/>
    <property type="match status" value="1"/>
</dbReference>
<dbReference type="NCBIfam" id="NF009103">
    <property type="entry name" value="PRK12448.1"/>
    <property type="match status" value="1"/>
</dbReference>
<dbReference type="PANTHER" id="PTHR43661">
    <property type="entry name" value="D-XYLONATE DEHYDRATASE"/>
    <property type="match status" value="1"/>
</dbReference>
<dbReference type="PANTHER" id="PTHR43661:SF3">
    <property type="entry name" value="D-XYLONATE DEHYDRATASE YAGF-RELATED"/>
    <property type="match status" value="1"/>
</dbReference>
<dbReference type="Pfam" id="PF24877">
    <property type="entry name" value="ILV_EDD_C"/>
    <property type="match status" value="1"/>
</dbReference>
<dbReference type="Pfam" id="PF00920">
    <property type="entry name" value="ILVD_EDD_N"/>
    <property type="match status" value="1"/>
</dbReference>
<dbReference type="SUPFAM" id="SSF143975">
    <property type="entry name" value="IlvD/EDD N-terminal domain-like"/>
    <property type="match status" value="1"/>
</dbReference>
<dbReference type="SUPFAM" id="SSF52016">
    <property type="entry name" value="LeuD/IlvD-like"/>
    <property type="match status" value="1"/>
</dbReference>
<dbReference type="PROSITE" id="PS00886">
    <property type="entry name" value="ILVD_EDD_1"/>
    <property type="match status" value="1"/>
</dbReference>
<dbReference type="PROSITE" id="PS00887">
    <property type="entry name" value="ILVD_EDD_2"/>
    <property type="match status" value="1"/>
</dbReference>
<accession>A5UHP2</accession>
<evidence type="ECO:0000255" key="1">
    <source>
        <dbReference type="HAMAP-Rule" id="MF_00012"/>
    </source>
</evidence>
<reference key="1">
    <citation type="journal article" date="2007" name="Genome Biol.">
        <title>Characterization and modeling of the Haemophilus influenzae core and supragenomes based on the complete genomic sequences of Rd and 12 clinical nontypeable strains.</title>
        <authorList>
            <person name="Hogg J.S."/>
            <person name="Hu F.Z."/>
            <person name="Janto B."/>
            <person name="Boissy R."/>
            <person name="Hayes J."/>
            <person name="Keefe R."/>
            <person name="Post J.C."/>
            <person name="Ehrlich G.D."/>
        </authorList>
    </citation>
    <scope>NUCLEOTIDE SEQUENCE [LARGE SCALE GENOMIC DNA]</scope>
    <source>
        <strain>PittGG</strain>
    </source>
</reference>
<keyword id="KW-0001">2Fe-2S</keyword>
<keyword id="KW-0028">Amino-acid biosynthesis</keyword>
<keyword id="KW-0100">Branched-chain amino acid biosynthesis</keyword>
<keyword id="KW-0408">Iron</keyword>
<keyword id="KW-0411">Iron-sulfur</keyword>
<keyword id="KW-0456">Lyase</keyword>
<keyword id="KW-0460">Magnesium</keyword>
<keyword id="KW-0479">Metal-binding</keyword>
<proteinExistence type="inferred from homology"/>
<organism>
    <name type="scientific">Haemophilus influenzae (strain PittGG)</name>
    <dbReference type="NCBI Taxonomy" id="374931"/>
    <lineage>
        <taxon>Bacteria</taxon>
        <taxon>Pseudomonadati</taxon>
        <taxon>Pseudomonadota</taxon>
        <taxon>Gammaproteobacteria</taxon>
        <taxon>Pasteurellales</taxon>
        <taxon>Pasteurellaceae</taxon>
        <taxon>Haemophilus</taxon>
    </lineage>
</organism>
<name>ILVD_HAEIG</name>
<comment type="function">
    <text evidence="1">Functions in the biosynthesis of branched-chain amino acids. Catalyzes the dehydration of (2R,3R)-2,3-dihydroxy-3-methylpentanoate (2,3-dihydroxy-3-methylvalerate) into 2-oxo-3-methylpentanoate (2-oxo-3-methylvalerate) and of (2R)-2,3-dihydroxy-3-methylbutanoate (2,3-dihydroxyisovalerate) into 2-oxo-3-methylbutanoate (2-oxoisovalerate), the penultimate precursor to L-isoleucine and L-valine, respectively.</text>
</comment>
<comment type="catalytic activity">
    <reaction evidence="1">
        <text>(2R)-2,3-dihydroxy-3-methylbutanoate = 3-methyl-2-oxobutanoate + H2O</text>
        <dbReference type="Rhea" id="RHEA:24809"/>
        <dbReference type="ChEBI" id="CHEBI:11851"/>
        <dbReference type="ChEBI" id="CHEBI:15377"/>
        <dbReference type="ChEBI" id="CHEBI:49072"/>
        <dbReference type="EC" id="4.2.1.9"/>
    </reaction>
    <physiologicalReaction direction="left-to-right" evidence="1">
        <dbReference type="Rhea" id="RHEA:24810"/>
    </physiologicalReaction>
</comment>
<comment type="catalytic activity">
    <reaction evidence="1">
        <text>(2R,3R)-2,3-dihydroxy-3-methylpentanoate = (S)-3-methyl-2-oxopentanoate + H2O</text>
        <dbReference type="Rhea" id="RHEA:27694"/>
        <dbReference type="ChEBI" id="CHEBI:15377"/>
        <dbReference type="ChEBI" id="CHEBI:35146"/>
        <dbReference type="ChEBI" id="CHEBI:49258"/>
        <dbReference type="EC" id="4.2.1.9"/>
    </reaction>
    <physiologicalReaction direction="left-to-right" evidence="1">
        <dbReference type="Rhea" id="RHEA:27695"/>
    </physiologicalReaction>
</comment>
<comment type="cofactor">
    <cofactor evidence="1">
        <name>[2Fe-2S] cluster</name>
        <dbReference type="ChEBI" id="CHEBI:190135"/>
    </cofactor>
    <text evidence="1">Binds 1 [2Fe-2S] cluster per subunit. This cluster acts as a Lewis acid cofactor.</text>
</comment>
<comment type="cofactor">
    <cofactor evidence="1">
        <name>Mg(2+)</name>
        <dbReference type="ChEBI" id="CHEBI:18420"/>
    </cofactor>
</comment>
<comment type="pathway">
    <text evidence="1">Amino-acid biosynthesis; L-isoleucine biosynthesis; L-isoleucine from 2-oxobutanoate: step 3/4.</text>
</comment>
<comment type="pathway">
    <text evidence="1">Amino-acid biosynthesis; L-valine biosynthesis; L-valine from pyruvate: step 3/4.</text>
</comment>
<comment type="subunit">
    <text evidence="1">Homodimer.</text>
</comment>
<comment type="similarity">
    <text evidence="1">Belongs to the IlvD/Edd family.</text>
</comment>
<feature type="chain" id="PRO_1000000988" description="Dihydroxy-acid dehydratase">
    <location>
        <begin position="1"/>
        <end position="612"/>
    </location>
</feature>
<feature type="active site" description="Proton acceptor" evidence="1">
    <location>
        <position position="517"/>
    </location>
</feature>
<feature type="binding site" evidence="1">
    <location>
        <position position="81"/>
    </location>
    <ligand>
        <name>Mg(2+)</name>
        <dbReference type="ChEBI" id="CHEBI:18420"/>
    </ligand>
</feature>
<feature type="binding site" evidence="1">
    <location>
        <position position="122"/>
    </location>
    <ligand>
        <name>[2Fe-2S] cluster</name>
        <dbReference type="ChEBI" id="CHEBI:190135"/>
    </ligand>
</feature>
<feature type="binding site" evidence="1">
    <location>
        <position position="123"/>
    </location>
    <ligand>
        <name>Mg(2+)</name>
        <dbReference type="ChEBI" id="CHEBI:18420"/>
    </ligand>
</feature>
<feature type="binding site" description="via carbamate group" evidence="1">
    <location>
        <position position="124"/>
    </location>
    <ligand>
        <name>Mg(2+)</name>
        <dbReference type="ChEBI" id="CHEBI:18420"/>
    </ligand>
</feature>
<feature type="binding site" evidence="1">
    <location>
        <position position="195"/>
    </location>
    <ligand>
        <name>[2Fe-2S] cluster</name>
        <dbReference type="ChEBI" id="CHEBI:190135"/>
    </ligand>
</feature>
<feature type="binding site" evidence="1">
    <location>
        <position position="491"/>
    </location>
    <ligand>
        <name>Mg(2+)</name>
        <dbReference type="ChEBI" id="CHEBI:18420"/>
    </ligand>
</feature>
<feature type="modified residue" description="N6-carboxylysine" evidence="1">
    <location>
        <position position="124"/>
    </location>
</feature>
<protein>
    <recommendedName>
        <fullName evidence="1">Dihydroxy-acid dehydratase</fullName>
        <shortName evidence="1">DAD</shortName>
        <ecNumber evidence="1">4.2.1.9</ecNumber>
    </recommendedName>
</protein>
<gene>
    <name evidence="1" type="primary">ilvD</name>
    <name type="ordered locus">CGSHiGG_07165</name>
</gene>
<sequence>MPKLRSATSTQGRNMAGARALWRATGMKENDFGKPIIAVVNSFTQFVPGHVHLKDMGQLVAAEIEKAGGVAKEFNTIAVDDGIAMGHGGMLYSLPSRDLIADSVEYMVNAHCADAMVCISNCDKITPGMLMAAMRLNIPTIFVSGGPMEAGKTKLSDQLIRLDLVDAMIEAADPNVSDERIDAIERSACPTCGSCSGMFTANSMNCLTEALGLSLPGNGSMLATHADRKELFLKAGRQIVELCKRYYEQDDASVLPRSIGTFDAFENAMSLDIAMGGSSNTVLHLLAAAQEAGMDFKMEDIDRLSRKVPCLSKIAPNTNKYHMEDVHRAGGIMGLLGELDRAGLIHKNTHTVLGMSMGEQLDQYDIIRNQDEELHKFFRAGPAGIRTTQAFSQDCRWDTVDNDRVNGCIRNKENAISQEGGLAVLFGNLAEDGCIVKTAGVDESIWKFTGTAIVFESQEDAVAGILGGKVKEGHVVVIRYEGPKGGPGMQEMLYPTSYLKSMGLGKKCALLTDGRFSGGTSGLSIGHASPEAASGGAIGLVRDGDIINIDIPNRAINLEISNDELATRRAEQDQKGWQPANREREVSFALKVFGHFATSADKGAVRDKTLLK</sequence>